<evidence type="ECO:0000250" key="1"/>
<evidence type="ECO:0000255" key="2">
    <source>
        <dbReference type="PROSITE-ProRule" id="PRU00108"/>
    </source>
</evidence>
<evidence type="ECO:0000256" key="3">
    <source>
        <dbReference type="SAM" id="MobiDB-lite"/>
    </source>
</evidence>
<evidence type="ECO:0000269" key="4">
    <source>
    </source>
</evidence>
<evidence type="ECO:0000305" key="5"/>
<sequence>MAQDDEDVGLALGLSLGSGGHRRQRESRDEAPSSAAASLLTLRLPAESGGQPQVVVKREVVRAEEEEYEYEYERALYSSSAAAADDDEGCNSRKKLRLSKEQSALLEDRFKEHSTLNPKQKVALAKQLNLRPRQVEVWFQNRRARTKLKQTEVDCELLKRCCETLTEENRRLHRELQQLRALTHSTAAGFFMATTLPVPAATLSICPSCERLATAAAAAGASPTAAADRTNKPTAPHLFSPFAKSAAC</sequence>
<reference key="1">
    <citation type="journal article" date="2005" name="PLoS Biol.">
        <title>The genomes of Oryza sativa: a history of duplications.</title>
        <authorList>
            <person name="Yu J."/>
            <person name="Wang J."/>
            <person name="Lin W."/>
            <person name="Li S."/>
            <person name="Li H."/>
            <person name="Zhou J."/>
            <person name="Ni P."/>
            <person name="Dong W."/>
            <person name="Hu S."/>
            <person name="Zeng C."/>
            <person name="Zhang J."/>
            <person name="Zhang Y."/>
            <person name="Li R."/>
            <person name="Xu Z."/>
            <person name="Li S."/>
            <person name="Li X."/>
            <person name="Zheng H."/>
            <person name="Cong L."/>
            <person name="Lin L."/>
            <person name="Yin J."/>
            <person name="Geng J."/>
            <person name="Li G."/>
            <person name="Shi J."/>
            <person name="Liu J."/>
            <person name="Lv H."/>
            <person name="Li J."/>
            <person name="Wang J."/>
            <person name="Deng Y."/>
            <person name="Ran L."/>
            <person name="Shi X."/>
            <person name="Wang X."/>
            <person name="Wu Q."/>
            <person name="Li C."/>
            <person name="Ren X."/>
            <person name="Wang J."/>
            <person name="Wang X."/>
            <person name="Li D."/>
            <person name="Liu D."/>
            <person name="Zhang X."/>
            <person name="Ji Z."/>
            <person name="Zhao W."/>
            <person name="Sun Y."/>
            <person name="Zhang Z."/>
            <person name="Bao J."/>
            <person name="Han Y."/>
            <person name="Dong L."/>
            <person name="Ji J."/>
            <person name="Chen P."/>
            <person name="Wu S."/>
            <person name="Liu J."/>
            <person name="Xiao Y."/>
            <person name="Bu D."/>
            <person name="Tan J."/>
            <person name="Yang L."/>
            <person name="Ye C."/>
            <person name="Zhang J."/>
            <person name="Xu J."/>
            <person name="Zhou Y."/>
            <person name="Yu Y."/>
            <person name="Zhang B."/>
            <person name="Zhuang S."/>
            <person name="Wei H."/>
            <person name="Liu B."/>
            <person name="Lei M."/>
            <person name="Yu H."/>
            <person name="Li Y."/>
            <person name="Xu H."/>
            <person name="Wei S."/>
            <person name="He X."/>
            <person name="Fang L."/>
            <person name="Zhang Z."/>
            <person name="Zhang Y."/>
            <person name="Huang X."/>
            <person name="Su Z."/>
            <person name="Tong W."/>
            <person name="Li J."/>
            <person name="Tong Z."/>
            <person name="Li S."/>
            <person name="Ye J."/>
            <person name="Wang L."/>
            <person name="Fang L."/>
            <person name="Lei T."/>
            <person name="Chen C.-S."/>
            <person name="Chen H.-C."/>
            <person name="Xu Z."/>
            <person name="Li H."/>
            <person name="Huang H."/>
            <person name="Zhang F."/>
            <person name="Xu H."/>
            <person name="Li N."/>
            <person name="Zhao C."/>
            <person name="Li S."/>
            <person name="Dong L."/>
            <person name="Huang Y."/>
            <person name="Li L."/>
            <person name="Xi Y."/>
            <person name="Qi Q."/>
            <person name="Li W."/>
            <person name="Zhang B."/>
            <person name="Hu W."/>
            <person name="Zhang Y."/>
            <person name="Tian X."/>
            <person name="Jiao Y."/>
            <person name="Liang X."/>
            <person name="Jin J."/>
            <person name="Gao L."/>
            <person name="Zheng W."/>
            <person name="Hao B."/>
            <person name="Liu S.-M."/>
            <person name="Wang W."/>
            <person name="Yuan L."/>
            <person name="Cao M."/>
            <person name="McDermott J."/>
            <person name="Samudrala R."/>
            <person name="Wang J."/>
            <person name="Wong G.K.-S."/>
            <person name="Yang H."/>
        </authorList>
    </citation>
    <scope>NUCLEOTIDE SEQUENCE [LARGE SCALE GENOMIC DNA]</scope>
    <source>
        <strain>cv. 93-11</strain>
    </source>
</reference>
<reference key="2">
    <citation type="journal article" date="2008" name="Plant Mol. Biol.">
        <title>A genome-wide survey of HD-Zip genes in rice and analysis of drought-responsive family members.</title>
        <authorList>
            <person name="Agalou A."/>
            <person name="Purwantomo S."/>
            <person name="Oevernaes E."/>
            <person name="Johannesson H."/>
            <person name="Zhu X."/>
            <person name="Estiati A."/>
            <person name="de Kam R.J."/>
            <person name="Engstroem P."/>
            <person name="Slamet-Loedin I.H."/>
            <person name="Zhu Z."/>
            <person name="Wang M."/>
            <person name="Xiong L."/>
            <person name="Meijer A.H."/>
            <person name="Ouwerkerk P.B.F."/>
        </authorList>
    </citation>
    <scope>NUCLEOTIDE SEQUENCE [MRNA] OF 195-248</scope>
    <scope>TISSUE SPECIFICITY</scope>
    <scope>GENE FAMILY</scope>
    <scope>NOMENCLATURE</scope>
    <source>
        <strain>cv. Minghui 86</strain>
    </source>
</reference>
<protein>
    <recommendedName>
        <fullName>Homeobox-leucine zipper protein HOX15</fullName>
    </recommendedName>
    <alternativeName>
        <fullName>HD-ZIP protein HOX15</fullName>
    </alternativeName>
    <alternativeName>
        <fullName>Homeodomain transcription factor HOX15</fullName>
    </alternativeName>
    <alternativeName>
        <fullName>OsHox15</fullName>
    </alternativeName>
</protein>
<name>HOX15_ORYSI</name>
<accession>A2Z4C4</accession>
<accession>A5JPV1</accession>
<keyword id="KW-0238">DNA-binding</keyword>
<keyword id="KW-0371">Homeobox</keyword>
<keyword id="KW-0539">Nucleus</keyword>
<keyword id="KW-1185">Reference proteome</keyword>
<keyword id="KW-0804">Transcription</keyword>
<keyword id="KW-0805">Transcription regulation</keyword>
<organism>
    <name type="scientific">Oryza sativa subsp. indica</name>
    <name type="common">Rice</name>
    <dbReference type="NCBI Taxonomy" id="39946"/>
    <lineage>
        <taxon>Eukaryota</taxon>
        <taxon>Viridiplantae</taxon>
        <taxon>Streptophyta</taxon>
        <taxon>Embryophyta</taxon>
        <taxon>Tracheophyta</taxon>
        <taxon>Spermatophyta</taxon>
        <taxon>Magnoliopsida</taxon>
        <taxon>Liliopsida</taxon>
        <taxon>Poales</taxon>
        <taxon>Poaceae</taxon>
        <taxon>BOP clade</taxon>
        <taxon>Oryzoideae</taxon>
        <taxon>Oryzeae</taxon>
        <taxon>Oryzinae</taxon>
        <taxon>Oryza</taxon>
        <taxon>Oryza sativa</taxon>
    </lineage>
</organism>
<feature type="chain" id="PRO_0000331702" description="Homeobox-leucine zipper protein HOX15">
    <location>
        <begin position="1"/>
        <end position="248"/>
    </location>
</feature>
<feature type="DNA-binding region" description="Homeobox" evidence="2">
    <location>
        <begin position="91"/>
        <end position="150"/>
    </location>
</feature>
<feature type="region of interest" description="Disordered" evidence="3">
    <location>
        <begin position="1"/>
        <end position="44"/>
    </location>
</feature>
<feature type="region of interest" description="Leucine-zipper">
    <location>
        <begin position="149"/>
        <end position="193"/>
    </location>
</feature>
<feature type="region of interest" description="Disordered" evidence="3">
    <location>
        <begin position="223"/>
        <end position="248"/>
    </location>
</feature>
<feature type="compositionally biased region" description="Low complexity" evidence="3">
    <location>
        <begin position="32"/>
        <end position="44"/>
    </location>
</feature>
<dbReference type="EMBL" id="CM000135">
    <property type="protein sequence ID" value="EAY77458.1"/>
    <property type="molecule type" value="Genomic_DNA"/>
</dbReference>
<dbReference type="EMBL" id="EF555536">
    <property type="protein sequence ID" value="ABQ57277.1"/>
    <property type="molecule type" value="mRNA"/>
</dbReference>
<dbReference type="SMR" id="A2Z4C4"/>
<dbReference type="STRING" id="39946.A2Z4C4"/>
<dbReference type="EnsemblPlants" id="BGIOSGA032409-TA">
    <property type="protein sequence ID" value="BGIOSGA032409-PA"/>
    <property type="gene ID" value="BGIOSGA032409"/>
</dbReference>
<dbReference type="EnsemblPlants" id="OsGoSa_10g0000200.01">
    <property type="protein sequence ID" value="OsGoSa_10g0000200.01"/>
    <property type="gene ID" value="OsGoSa_10g0000200"/>
</dbReference>
<dbReference type="EnsemblPlants" id="OsIR64_10g0000180.01">
    <property type="protein sequence ID" value="OsIR64_10g0000180.01"/>
    <property type="gene ID" value="OsIR64_10g0000180"/>
</dbReference>
<dbReference type="EnsemblPlants" id="OsKYG_10g0000200.01">
    <property type="protein sequence ID" value="OsKYG_10g0000200.01"/>
    <property type="gene ID" value="OsKYG_10g0000200"/>
</dbReference>
<dbReference type="EnsemblPlants" id="OsLima_10g0000190.01">
    <property type="protein sequence ID" value="OsLima_10g0000190.01"/>
    <property type="gene ID" value="OsLima_10g0000190"/>
</dbReference>
<dbReference type="Gramene" id="BGIOSGA032409-TA">
    <property type="protein sequence ID" value="BGIOSGA032409-PA"/>
    <property type="gene ID" value="BGIOSGA032409"/>
</dbReference>
<dbReference type="Gramene" id="OsGoSa_10g0000200.01">
    <property type="protein sequence ID" value="OsGoSa_10g0000200.01"/>
    <property type="gene ID" value="OsGoSa_10g0000200"/>
</dbReference>
<dbReference type="Gramene" id="OsIR64_10g0000180.01">
    <property type="protein sequence ID" value="OsIR64_10g0000180.01"/>
    <property type="gene ID" value="OsIR64_10g0000180"/>
</dbReference>
<dbReference type="Gramene" id="OsKYG_10g0000200.01">
    <property type="protein sequence ID" value="OsKYG_10g0000200.01"/>
    <property type="gene ID" value="OsKYG_10g0000200"/>
</dbReference>
<dbReference type="Gramene" id="OsLima_10g0000190.01">
    <property type="protein sequence ID" value="OsLima_10g0000190.01"/>
    <property type="gene ID" value="OsLima_10g0000190"/>
</dbReference>
<dbReference type="HOGENOM" id="CLU_049516_0_1_1"/>
<dbReference type="OMA" id="MEHKHED"/>
<dbReference type="OrthoDB" id="6159439at2759"/>
<dbReference type="Proteomes" id="UP000007015">
    <property type="component" value="Chromosome 10"/>
</dbReference>
<dbReference type="GO" id="GO:0005634">
    <property type="term" value="C:nucleus"/>
    <property type="evidence" value="ECO:0007669"/>
    <property type="project" value="UniProtKB-SubCell"/>
</dbReference>
<dbReference type="GO" id="GO:0000981">
    <property type="term" value="F:DNA-binding transcription factor activity, RNA polymerase II-specific"/>
    <property type="evidence" value="ECO:0007669"/>
    <property type="project" value="InterPro"/>
</dbReference>
<dbReference type="GO" id="GO:0043565">
    <property type="term" value="F:sequence-specific DNA binding"/>
    <property type="evidence" value="ECO:0007669"/>
    <property type="project" value="InterPro"/>
</dbReference>
<dbReference type="CDD" id="cd00086">
    <property type="entry name" value="homeodomain"/>
    <property type="match status" value="1"/>
</dbReference>
<dbReference type="FunFam" id="1.10.10.60:FF:000577">
    <property type="entry name" value="Homeobox-leucine zipper protein 18"/>
    <property type="match status" value="1"/>
</dbReference>
<dbReference type="Gene3D" id="1.10.10.60">
    <property type="entry name" value="Homeodomain-like"/>
    <property type="match status" value="1"/>
</dbReference>
<dbReference type="InterPro" id="IPR001356">
    <property type="entry name" value="HD"/>
</dbReference>
<dbReference type="InterPro" id="IPR050762">
    <property type="entry name" value="HD-ZIP_Homeobox_LZ_Class_II"/>
</dbReference>
<dbReference type="InterPro" id="IPR017970">
    <property type="entry name" value="Homeobox_CS"/>
</dbReference>
<dbReference type="InterPro" id="IPR009057">
    <property type="entry name" value="Homeodomain-like_sf"/>
</dbReference>
<dbReference type="InterPro" id="IPR003106">
    <property type="entry name" value="Leu_zip_homeo"/>
</dbReference>
<dbReference type="PANTHER" id="PTHR45714">
    <property type="entry name" value="HOMEOBOX-LEUCINE ZIPPER PROTEIN HAT14"/>
    <property type="match status" value="1"/>
</dbReference>
<dbReference type="PANTHER" id="PTHR45714:SF25">
    <property type="entry name" value="HOMEOBOX-LEUCINE ZIPPER PROTEIN HOX15"/>
    <property type="match status" value="1"/>
</dbReference>
<dbReference type="Pfam" id="PF02183">
    <property type="entry name" value="HALZ"/>
    <property type="match status" value="1"/>
</dbReference>
<dbReference type="Pfam" id="PF00046">
    <property type="entry name" value="Homeodomain"/>
    <property type="match status" value="1"/>
</dbReference>
<dbReference type="SMART" id="SM00340">
    <property type="entry name" value="HALZ"/>
    <property type="match status" value="1"/>
</dbReference>
<dbReference type="SMART" id="SM00389">
    <property type="entry name" value="HOX"/>
    <property type="match status" value="1"/>
</dbReference>
<dbReference type="SUPFAM" id="SSF46689">
    <property type="entry name" value="Homeodomain-like"/>
    <property type="match status" value="1"/>
</dbReference>
<dbReference type="PROSITE" id="PS00027">
    <property type="entry name" value="HOMEOBOX_1"/>
    <property type="match status" value="1"/>
</dbReference>
<dbReference type="PROSITE" id="PS50071">
    <property type="entry name" value="HOMEOBOX_2"/>
    <property type="match status" value="1"/>
</dbReference>
<comment type="function">
    <text evidence="1">Probable transcription factor.</text>
</comment>
<comment type="subcellular location">
    <subcellularLocation>
        <location evidence="5">Nucleus</location>
    </subcellularLocation>
</comment>
<comment type="tissue specificity">
    <text evidence="4">Expressed in seedlings, stems, leaf blades and panicles.</text>
</comment>
<comment type="similarity">
    <text evidence="5">Belongs to the HD-ZIP homeobox family. Class II subfamily.</text>
</comment>
<proteinExistence type="evidence at transcript level"/>
<gene>
    <name type="primary">HOX15</name>
    <name type="ORF">OsI_031417</name>
</gene>